<comment type="function">
    <text evidence="1">Has flap endonuclease activity. During DNA replication, flap endonucleases cleave the 5'-overhanging flap structure that is generated by displacement synthesis when DNA polymerase encounters the 5'-end of a downstream Okazaki fragment.</text>
</comment>
<comment type="cofactor">
    <cofactor evidence="1">
        <name>Mg(2+)</name>
        <dbReference type="ChEBI" id="CHEBI:18420"/>
    </cofactor>
    <text evidence="1">Binds 2 Mg(2+) per subunit. Only one magnesium ion has a direct interaction with the protein, the other interactions are indirect.</text>
</comment>
<comment type="cofactor">
    <cofactor evidence="1">
        <name>K(+)</name>
        <dbReference type="ChEBI" id="CHEBI:29103"/>
    </cofactor>
    <text evidence="1">Binds 1 K(+) per subunit. The potassium ion strongly increases the affinity for DNA.</text>
</comment>
<comment type="similarity">
    <text evidence="1">Belongs to the Xni family.</text>
</comment>
<evidence type="ECO:0000255" key="1">
    <source>
        <dbReference type="HAMAP-Rule" id="MF_01192"/>
    </source>
</evidence>
<protein>
    <recommendedName>
        <fullName evidence="1">Flap endonuclease Xni</fullName>
        <shortName evidence="1">FEN</shortName>
        <ecNumber evidence="1">3.1.-.-</ecNumber>
    </recommendedName>
</protein>
<sequence>MNRFLIIDGLNLVRRIHAAQPNENDVNGLPERVTSACRKLLSKHNPSHVTLVWDGDAISWRKKLYDDYKKGRKPMPEALSQALPALKQHLAERGFHSIDAIAEADDVIATLASKMVQAKGEAIIVSTDKGFTQLLSPQIQLWDHFNQQAITIEDRERQLGVDRSQFIDFLAMAGDSGNKIPGIPGIGPKSACELLKTFRTLANVYASLDKIGAKQAKKLEEGRALARLSYKLVQLQTDIPLNTRLANFRVELTAKA</sequence>
<proteinExistence type="inferred from homology"/>
<keyword id="KW-0238">DNA-binding</keyword>
<keyword id="KW-0255">Endonuclease</keyword>
<keyword id="KW-0378">Hydrolase</keyword>
<keyword id="KW-0460">Magnesium</keyword>
<keyword id="KW-0479">Metal-binding</keyword>
<keyword id="KW-0540">Nuclease</keyword>
<keyword id="KW-0630">Potassium</keyword>
<keyword id="KW-1185">Reference proteome</keyword>
<gene>
    <name evidence="1" type="primary">xni</name>
    <name evidence="1" type="synonym">ygdG</name>
    <name type="ordered locus">Shew_2756</name>
</gene>
<accession>A3QGM4</accession>
<dbReference type="EC" id="3.1.-.-" evidence="1"/>
<dbReference type="EMBL" id="CP000606">
    <property type="protein sequence ID" value="ABO24622.1"/>
    <property type="molecule type" value="Genomic_DNA"/>
</dbReference>
<dbReference type="RefSeq" id="WP_011866553.1">
    <property type="nucleotide sequence ID" value="NC_009092.1"/>
</dbReference>
<dbReference type="SMR" id="A3QGM4"/>
<dbReference type="STRING" id="323850.Shew_2756"/>
<dbReference type="KEGG" id="slo:Shew_2756"/>
<dbReference type="eggNOG" id="COG0258">
    <property type="taxonomic scope" value="Bacteria"/>
</dbReference>
<dbReference type="HOGENOM" id="CLU_004675_1_2_6"/>
<dbReference type="OrthoDB" id="8070997at2"/>
<dbReference type="Proteomes" id="UP000001558">
    <property type="component" value="Chromosome"/>
</dbReference>
<dbReference type="GO" id="GO:0008409">
    <property type="term" value="F:5'-3' exonuclease activity"/>
    <property type="evidence" value="ECO:0007669"/>
    <property type="project" value="InterPro"/>
</dbReference>
<dbReference type="GO" id="GO:0017108">
    <property type="term" value="F:5'-flap endonuclease activity"/>
    <property type="evidence" value="ECO:0007669"/>
    <property type="project" value="UniProtKB-UniRule"/>
</dbReference>
<dbReference type="GO" id="GO:0003677">
    <property type="term" value="F:DNA binding"/>
    <property type="evidence" value="ECO:0007669"/>
    <property type="project" value="UniProtKB-UniRule"/>
</dbReference>
<dbReference type="GO" id="GO:0000287">
    <property type="term" value="F:magnesium ion binding"/>
    <property type="evidence" value="ECO:0007669"/>
    <property type="project" value="UniProtKB-UniRule"/>
</dbReference>
<dbReference type="GO" id="GO:0030955">
    <property type="term" value="F:potassium ion binding"/>
    <property type="evidence" value="ECO:0007669"/>
    <property type="project" value="UniProtKB-UniRule"/>
</dbReference>
<dbReference type="GO" id="GO:0033567">
    <property type="term" value="P:DNA replication, Okazaki fragment processing"/>
    <property type="evidence" value="ECO:0007669"/>
    <property type="project" value="UniProtKB-UniRule"/>
</dbReference>
<dbReference type="CDD" id="cd09898">
    <property type="entry name" value="H3TH_53EXO"/>
    <property type="match status" value="1"/>
</dbReference>
<dbReference type="CDD" id="cd09859">
    <property type="entry name" value="PIN_53EXO"/>
    <property type="match status" value="1"/>
</dbReference>
<dbReference type="FunFam" id="1.10.150.20:FF:000003">
    <property type="entry name" value="DNA polymerase I"/>
    <property type="match status" value="1"/>
</dbReference>
<dbReference type="Gene3D" id="1.10.150.20">
    <property type="entry name" value="5' to 3' exonuclease, C-terminal subdomain"/>
    <property type="match status" value="1"/>
</dbReference>
<dbReference type="Gene3D" id="3.40.50.1010">
    <property type="entry name" value="5'-nuclease"/>
    <property type="match status" value="1"/>
</dbReference>
<dbReference type="HAMAP" id="MF_01192">
    <property type="entry name" value="Xni"/>
    <property type="match status" value="1"/>
</dbReference>
<dbReference type="InterPro" id="IPR020046">
    <property type="entry name" value="5-3_exonucl_a-hlix_arch_N"/>
</dbReference>
<dbReference type="InterPro" id="IPR002421">
    <property type="entry name" value="5-3_exonuclease"/>
</dbReference>
<dbReference type="InterPro" id="IPR036279">
    <property type="entry name" value="5-3_exonuclease_C_sf"/>
</dbReference>
<dbReference type="InterPro" id="IPR020045">
    <property type="entry name" value="DNA_polI_H3TH"/>
</dbReference>
<dbReference type="InterPro" id="IPR038969">
    <property type="entry name" value="FEN"/>
</dbReference>
<dbReference type="InterPro" id="IPR008918">
    <property type="entry name" value="HhH2"/>
</dbReference>
<dbReference type="InterPro" id="IPR029060">
    <property type="entry name" value="PIN-like_dom_sf"/>
</dbReference>
<dbReference type="InterPro" id="IPR022895">
    <property type="entry name" value="Xni"/>
</dbReference>
<dbReference type="NCBIfam" id="NF007017">
    <property type="entry name" value="PRK09482.1"/>
    <property type="match status" value="1"/>
</dbReference>
<dbReference type="PANTHER" id="PTHR42646:SF2">
    <property type="entry name" value="5'-3' EXONUCLEASE FAMILY PROTEIN"/>
    <property type="match status" value="1"/>
</dbReference>
<dbReference type="PANTHER" id="PTHR42646">
    <property type="entry name" value="FLAP ENDONUCLEASE XNI"/>
    <property type="match status" value="1"/>
</dbReference>
<dbReference type="Pfam" id="PF01367">
    <property type="entry name" value="5_3_exonuc"/>
    <property type="match status" value="1"/>
</dbReference>
<dbReference type="Pfam" id="PF02739">
    <property type="entry name" value="5_3_exonuc_N"/>
    <property type="match status" value="1"/>
</dbReference>
<dbReference type="SMART" id="SM00475">
    <property type="entry name" value="53EXOc"/>
    <property type="match status" value="1"/>
</dbReference>
<dbReference type="SMART" id="SM00279">
    <property type="entry name" value="HhH2"/>
    <property type="match status" value="1"/>
</dbReference>
<dbReference type="SUPFAM" id="SSF47807">
    <property type="entry name" value="5' to 3' exonuclease, C-terminal subdomain"/>
    <property type="match status" value="1"/>
</dbReference>
<dbReference type="SUPFAM" id="SSF88723">
    <property type="entry name" value="PIN domain-like"/>
    <property type="match status" value="1"/>
</dbReference>
<feature type="chain" id="PRO_0000297876" description="Flap endonuclease Xni">
    <location>
        <begin position="1"/>
        <end position="256"/>
    </location>
</feature>
<feature type="domain" description="5'-3' exonuclease" evidence="1">
    <location>
        <begin position="164"/>
        <end position="250"/>
    </location>
</feature>
<feature type="region of interest" description="Interaction with DNA" evidence="1">
    <location>
        <begin position="185"/>
        <end position="190"/>
    </location>
</feature>
<feature type="binding site" evidence="1">
    <location>
        <position position="105"/>
    </location>
    <ligand>
        <name>Mg(2+)</name>
        <dbReference type="ChEBI" id="CHEBI:18420"/>
    </ligand>
</feature>
<feature type="binding site" evidence="1">
    <location>
        <position position="172"/>
    </location>
    <ligand>
        <name>K(+)</name>
        <dbReference type="ChEBI" id="CHEBI:29103"/>
    </ligand>
</feature>
<feature type="binding site" evidence="1">
    <location>
        <position position="173"/>
    </location>
    <ligand>
        <name>K(+)</name>
        <dbReference type="ChEBI" id="CHEBI:29103"/>
    </ligand>
</feature>
<feature type="binding site" evidence="1">
    <location>
        <position position="181"/>
    </location>
    <ligand>
        <name>K(+)</name>
        <dbReference type="ChEBI" id="CHEBI:29103"/>
    </ligand>
</feature>
<feature type="binding site" evidence="1">
    <location>
        <position position="183"/>
    </location>
    <ligand>
        <name>K(+)</name>
        <dbReference type="ChEBI" id="CHEBI:29103"/>
    </ligand>
</feature>
<feature type="binding site" evidence="1">
    <location>
        <position position="186"/>
    </location>
    <ligand>
        <name>K(+)</name>
        <dbReference type="ChEBI" id="CHEBI:29103"/>
    </ligand>
</feature>
<reference key="1">
    <citation type="submission" date="2007-03" db="EMBL/GenBank/DDBJ databases">
        <title>Complete sequence of Shewanella loihica PV-4.</title>
        <authorList>
            <consortium name="US DOE Joint Genome Institute"/>
            <person name="Copeland A."/>
            <person name="Lucas S."/>
            <person name="Lapidus A."/>
            <person name="Barry K."/>
            <person name="Detter J.C."/>
            <person name="Glavina del Rio T."/>
            <person name="Hammon N."/>
            <person name="Israni S."/>
            <person name="Dalin E."/>
            <person name="Tice H."/>
            <person name="Pitluck S."/>
            <person name="Chain P."/>
            <person name="Malfatti S."/>
            <person name="Shin M."/>
            <person name="Vergez L."/>
            <person name="Schmutz J."/>
            <person name="Larimer F."/>
            <person name="Land M."/>
            <person name="Hauser L."/>
            <person name="Kyrpides N."/>
            <person name="Mikhailova N."/>
            <person name="Romine M.F."/>
            <person name="Serres G."/>
            <person name="Fredrickson J."/>
            <person name="Tiedje J."/>
            <person name="Richardson P."/>
        </authorList>
    </citation>
    <scope>NUCLEOTIDE SEQUENCE [LARGE SCALE GENOMIC DNA]</scope>
    <source>
        <strain>ATCC BAA-1088 / PV-4</strain>
    </source>
</reference>
<organism>
    <name type="scientific">Shewanella loihica (strain ATCC BAA-1088 / PV-4)</name>
    <dbReference type="NCBI Taxonomy" id="323850"/>
    <lineage>
        <taxon>Bacteria</taxon>
        <taxon>Pseudomonadati</taxon>
        <taxon>Pseudomonadota</taxon>
        <taxon>Gammaproteobacteria</taxon>
        <taxon>Alteromonadales</taxon>
        <taxon>Shewanellaceae</taxon>
        <taxon>Shewanella</taxon>
    </lineage>
</organism>
<name>XNI_SHELP</name>